<gene>
    <name evidence="1" type="primary">rpmG</name>
    <name type="ordered locus">SPG_2073</name>
</gene>
<dbReference type="EMBL" id="CP001015">
    <property type="protein sequence ID" value="ACF56429.1"/>
    <property type="molecule type" value="Genomic_DNA"/>
</dbReference>
<dbReference type="SMR" id="B5E3E3"/>
<dbReference type="KEGG" id="spx:SPG_2073"/>
<dbReference type="HOGENOM" id="CLU_190949_3_2_9"/>
<dbReference type="GO" id="GO:0005737">
    <property type="term" value="C:cytoplasm"/>
    <property type="evidence" value="ECO:0007669"/>
    <property type="project" value="UniProtKB-ARBA"/>
</dbReference>
<dbReference type="GO" id="GO:1990904">
    <property type="term" value="C:ribonucleoprotein complex"/>
    <property type="evidence" value="ECO:0007669"/>
    <property type="project" value="UniProtKB-KW"/>
</dbReference>
<dbReference type="GO" id="GO:0005840">
    <property type="term" value="C:ribosome"/>
    <property type="evidence" value="ECO:0007669"/>
    <property type="project" value="UniProtKB-KW"/>
</dbReference>
<dbReference type="GO" id="GO:0003735">
    <property type="term" value="F:structural constituent of ribosome"/>
    <property type="evidence" value="ECO:0007669"/>
    <property type="project" value="InterPro"/>
</dbReference>
<dbReference type="GO" id="GO:0006412">
    <property type="term" value="P:translation"/>
    <property type="evidence" value="ECO:0007669"/>
    <property type="project" value="UniProtKB-UniRule"/>
</dbReference>
<dbReference type="Gene3D" id="2.20.28.120">
    <property type="entry name" value="Ribosomal protein L33"/>
    <property type="match status" value="1"/>
</dbReference>
<dbReference type="HAMAP" id="MF_00294">
    <property type="entry name" value="Ribosomal_bL33"/>
    <property type="match status" value="1"/>
</dbReference>
<dbReference type="InterPro" id="IPR001705">
    <property type="entry name" value="Ribosomal_bL33"/>
</dbReference>
<dbReference type="InterPro" id="IPR018264">
    <property type="entry name" value="Ribosomal_bL33_CS"/>
</dbReference>
<dbReference type="InterPro" id="IPR038584">
    <property type="entry name" value="Ribosomal_bL33_sf"/>
</dbReference>
<dbReference type="InterPro" id="IPR011332">
    <property type="entry name" value="Ribosomal_zn-bd"/>
</dbReference>
<dbReference type="NCBIfam" id="NF001764">
    <property type="entry name" value="PRK00504.1"/>
    <property type="match status" value="1"/>
</dbReference>
<dbReference type="NCBIfam" id="NF001860">
    <property type="entry name" value="PRK00595.1"/>
    <property type="match status" value="1"/>
</dbReference>
<dbReference type="NCBIfam" id="TIGR01023">
    <property type="entry name" value="rpmG_bact"/>
    <property type="match status" value="1"/>
</dbReference>
<dbReference type="PANTHER" id="PTHR43168">
    <property type="entry name" value="50S RIBOSOMAL PROTEIN L33, CHLOROPLASTIC"/>
    <property type="match status" value="1"/>
</dbReference>
<dbReference type="PANTHER" id="PTHR43168:SF2">
    <property type="entry name" value="LARGE RIBOSOMAL SUBUNIT PROTEIN BL33C"/>
    <property type="match status" value="1"/>
</dbReference>
<dbReference type="Pfam" id="PF00471">
    <property type="entry name" value="Ribosomal_L33"/>
    <property type="match status" value="1"/>
</dbReference>
<dbReference type="SUPFAM" id="SSF57829">
    <property type="entry name" value="Zn-binding ribosomal proteins"/>
    <property type="match status" value="1"/>
</dbReference>
<dbReference type="PROSITE" id="PS00582">
    <property type="entry name" value="RIBOSOMAL_L33"/>
    <property type="match status" value="1"/>
</dbReference>
<organism>
    <name type="scientific">Streptococcus pneumoniae serotype 19F (strain G54)</name>
    <dbReference type="NCBI Taxonomy" id="512566"/>
    <lineage>
        <taxon>Bacteria</taxon>
        <taxon>Bacillati</taxon>
        <taxon>Bacillota</taxon>
        <taxon>Bacilli</taxon>
        <taxon>Lactobacillales</taxon>
        <taxon>Streptococcaceae</taxon>
        <taxon>Streptococcus</taxon>
    </lineage>
</organism>
<name>RL33_STRP4</name>
<keyword id="KW-0687">Ribonucleoprotein</keyword>
<keyword id="KW-0689">Ribosomal protein</keyword>
<comment type="similarity">
    <text evidence="1">Belongs to the bacterial ribosomal protein bL33 family.</text>
</comment>
<proteinExistence type="inferred from homology"/>
<reference key="1">
    <citation type="journal article" date="2001" name="Microb. Drug Resist.">
        <title>Annotated draft genomic sequence from a Streptococcus pneumoniae type 19F clinical isolate.</title>
        <authorList>
            <person name="Dopazo J."/>
            <person name="Mendoza A."/>
            <person name="Herrero J."/>
            <person name="Caldara F."/>
            <person name="Humbert Y."/>
            <person name="Friedli L."/>
            <person name="Guerrier M."/>
            <person name="Grand-Schenk E."/>
            <person name="Gandin C."/>
            <person name="de Francesco M."/>
            <person name="Polissi A."/>
            <person name="Buell G."/>
            <person name="Feger G."/>
            <person name="Garcia E."/>
            <person name="Peitsch M."/>
            <person name="Garcia-Bustos J.F."/>
        </authorList>
    </citation>
    <scope>NUCLEOTIDE SEQUENCE [LARGE SCALE GENOMIC DNA]</scope>
    <source>
        <strain>G54</strain>
    </source>
</reference>
<reference key="2">
    <citation type="submission" date="2008-03" db="EMBL/GenBank/DDBJ databases">
        <title>Pneumococcal beta glucoside metabolism investigated by whole genome comparison.</title>
        <authorList>
            <person name="Mulas L."/>
            <person name="Trappetti C."/>
            <person name="Hakenbeck R."/>
            <person name="Iannelli F."/>
            <person name="Pozzi G."/>
            <person name="Davidsen T.M."/>
            <person name="Tettelin H."/>
            <person name="Oggioni M."/>
        </authorList>
    </citation>
    <scope>NUCLEOTIDE SEQUENCE [LARGE SCALE GENOMIC DNA]</scope>
    <source>
        <strain>G54</strain>
    </source>
</reference>
<feature type="chain" id="PRO_0000356714" description="Large ribosomal subunit protein bL33">
    <location>
        <begin position="1"/>
        <end position="49"/>
    </location>
</feature>
<evidence type="ECO:0000255" key="1">
    <source>
        <dbReference type="HAMAP-Rule" id="MF_00294"/>
    </source>
</evidence>
<evidence type="ECO:0000305" key="2"/>
<accession>B5E3E3</accession>
<sequence length="49" mass="5911">MRVNITLEHKESGERLYLTSKNKRNTPDRLQLKKYSPKLRKHVVFTEVK</sequence>
<protein>
    <recommendedName>
        <fullName evidence="1">Large ribosomal subunit protein bL33</fullName>
    </recommendedName>
    <alternativeName>
        <fullName evidence="2">50S ribosomal protein L33</fullName>
    </alternativeName>
</protein>